<feature type="chain" id="PRO_0000368896" description="ATP synthase subunit b-delta">
    <location>
        <begin position="1"/>
        <end position="446"/>
    </location>
</feature>
<feature type="transmembrane region" description="Helical" evidence="2">
    <location>
        <begin position="4"/>
        <end position="24"/>
    </location>
</feature>
<feature type="region of interest" description="ATP synthase subunit b">
    <location>
        <begin position="1"/>
        <end position="168"/>
    </location>
</feature>
<feature type="region of interest" description="ATP synthase subunit delta">
    <location>
        <begin position="169"/>
        <end position="443"/>
    </location>
</feature>
<dbReference type="EMBL" id="CP000611">
    <property type="protein sequence ID" value="ABQ73056.1"/>
    <property type="molecule type" value="Genomic_DNA"/>
</dbReference>
<dbReference type="RefSeq" id="WP_003406697.1">
    <property type="nucleotide sequence ID" value="NZ_CP016972.1"/>
</dbReference>
<dbReference type="SMR" id="A5U206"/>
<dbReference type="KEGG" id="mra:MRA_1315"/>
<dbReference type="eggNOG" id="COG0711">
    <property type="taxonomic scope" value="Bacteria"/>
</dbReference>
<dbReference type="eggNOG" id="COG0712">
    <property type="taxonomic scope" value="Bacteria"/>
</dbReference>
<dbReference type="HOGENOM" id="CLU_722652_0_0_11"/>
<dbReference type="Proteomes" id="UP000001988">
    <property type="component" value="Chromosome"/>
</dbReference>
<dbReference type="GO" id="GO:0005886">
    <property type="term" value="C:plasma membrane"/>
    <property type="evidence" value="ECO:0007669"/>
    <property type="project" value="UniProtKB-SubCell"/>
</dbReference>
<dbReference type="GO" id="GO:0045259">
    <property type="term" value="C:proton-transporting ATP synthase complex"/>
    <property type="evidence" value="ECO:0007669"/>
    <property type="project" value="UniProtKB-KW"/>
</dbReference>
<dbReference type="GO" id="GO:0046933">
    <property type="term" value="F:proton-transporting ATP synthase activity, rotational mechanism"/>
    <property type="evidence" value="ECO:0007669"/>
    <property type="project" value="UniProtKB-UniRule"/>
</dbReference>
<dbReference type="CDD" id="cd06503">
    <property type="entry name" value="ATP-synt_Fo_b"/>
    <property type="match status" value="1"/>
</dbReference>
<dbReference type="Gene3D" id="1.20.5.620">
    <property type="entry name" value="F1F0 ATP synthase subunit B, membrane domain"/>
    <property type="match status" value="1"/>
</dbReference>
<dbReference type="Gene3D" id="1.10.520.20">
    <property type="entry name" value="N-terminal domain of the delta subunit of the F1F0-ATP synthase"/>
    <property type="match status" value="1"/>
</dbReference>
<dbReference type="HAMAP" id="MF_01398">
    <property type="entry name" value="ATP_synth_b_bprime"/>
    <property type="match status" value="1"/>
</dbReference>
<dbReference type="HAMAP" id="MF_01416">
    <property type="entry name" value="ATP_synth_delta_bact"/>
    <property type="match status" value="1"/>
</dbReference>
<dbReference type="InterPro" id="IPR028987">
    <property type="entry name" value="ATP_synth_B-like_membr_sf"/>
</dbReference>
<dbReference type="InterPro" id="IPR002146">
    <property type="entry name" value="ATP_synth_b/b'su_bac/chlpt"/>
</dbReference>
<dbReference type="InterPro" id="IPR005864">
    <property type="entry name" value="ATP_synth_F0_bsu_bac"/>
</dbReference>
<dbReference type="InterPro" id="IPR026015">
    <property type="entry name" value="ATP_synth_OSCP/delta_N_sf"/>
</dbReference>
<dbReference type="InterPro" id="IPR000711">
    <property type="entry name" value="ATPase_OSCP/dsu"/>
</dbReference>
<dbReference type="NCBIfam" id="TIGR01144">
    <property type="entry name" value="ATP_synt_b"/>
    <property type="match status" value="1"/>
</dbReference>
<dbReference type="NCBIfam" id="TIGR01145">
    <property type="entry name" value="ATP_synt_delta"/>
    <property type="match status" value="1"/>
</dbReference>
<dbReference type="NCBIfam" id="NF009961">
    <property type="entry name" value="PRK13428.1"/>
    <property type="match status" value="1"/>
</dbReference>
<dbReference type="NCBIfam" id="NF009967">
    <property type="entry name" value="PRK13430.1"/>
    <property type="match status" value="1"/>
</dbReference>
<dbReference type="PANTHER" id="PTHR11910">
    <property type="entry name" value="ATP SYNTHASE DELTA CHAIN"/>
    <property type="match status" value="1"/>
</dbReference>
<dbReference type="Pfam" id="PF00430">
    <property type="entry name" value="ATP-synt_B"/>
    <property type="match status" value="1"/>
</dbReference>
<dbReference type="Pfam" id="PF00213">
    <property type="entry name" value="OSCP"/>
    <property type="match status" value="1"/>
</dbReference>
<dbReference type="PRINTS" id="PR00125">
    <property type="entry name" value="ATPASEDELTA"/>
</dbReference>
<dbReference type="SUPFAM" id="SSF81573">
    <property type="entry name" value="F1F0 ATP synthase subunit B, membrane domain"/>
    <property type="match status" value="1"/>
</dbReference>
<organism>
    <name type="scientific">Mycobacterium tuberculosis (strain ATCC 25177 / H37Ra)</name>
    <dbReference type="NCBI Taxonomy" id="419947"/>
    <lineage>
        <taxon>Bacteria</taxon>
        <taxon>Bacillati</taxon>
        <taxon>Actinomycetota</taxon>
        <taxon>Actinomycetes</taxon>
        <taxon>Mycobacteriales</taxon>
        <taxon>Mycobacteriaceae</taxon>
        <taxon>Mycobacterium</taxon>
        <taxon>Mycobacterium tuberculosis complex</taxon>
    </lineage>
</organism>
<keyword id="KW-0066">ATP synthesis</keyword>
<keyword id="KW-1003">Cell membrane</keyword>
<keyword id="KW-0138">CF(0)</keyword>
<keyword id="KW-0375">Hydrogen ion transport</keyword>
<keyword id="KW-0406">Ion transport</keyword>
<keyword id="KW-0472">Membrane</keyword>
<keyword id="KW-0511">Multifunctional enzyme</keyword>
<keyword id="KW-1185">Reference proteome</keyword>
<keyword id="KW-0812">Transmembrane</keyword>
<keyword id="KW-1133">Transmembrane helix</keyword>
<keyword id="KW-0813">Transport</keyword>
<comment type="function">
    <text evidence="1">F(1)F(0) ATP synthase produces ATP from ADP in the presence of a proton or sodium gradient. F-type ATPases consist of two structural domains, F(1) containing the extramembraneous catalytic core and F(0) containing the membrane proton channel, linked together by a central stalk and a peripheral stalk. During catalysis, ATP synthesis in the catalytic domain of F(1) is coupled via a rotary mechanism of the central stalk subunits to proton translocation (By similarity).</text>
</comment>
<comment type="function">
    <text evidence="1">This fusion protein includes a component of the F(0) channel (subunit b) and of the F(1) subunit (subunit delta). Two copies of subunit b and one of delta together form the peripheral 'stator' stalk which links F(1) to F(0) (By similarity).</text>
</comment>
<comment type="subunit">
    <text evidence="1">F-type ATPases have 2 components, F(1) - the catalytic core - and F(0) - the membrane proton channel. F(1) has five subunits: alpha(3), beta(3), gamma(1), delta(1), epsilon(1). F(0) has three main subunits: a(1), b(2) and c(10-14). The alpha and beta chains form an alternating ring which encloses part of the gamma chain. F(1) is attached to F(0) by a central stalk formed by the gamma and epsilon chains, while a peripheral stalk is formed by the delta and b chains (By similarity).</text>
</comment>
<comment type="subcellular location">
    <subcellularLocation>
        <location evidence="1">Cell membrane</location>
        <topology evidence="1">Single-pass membrane protein</topology>
    </subcellularLocation>
</comment>
<comment type="similarity">
    <text evidence="3">In the N-terminal section; belongs to the ATPase B chain family.</text>
</comment>
<comment type="similarity">
    <text evidence="3">In the C-terminal section; belongs to the ATPase delta chain family.</text>
</comment>
<sequence>MSTFIGQLFGFAVIVYLVWRFIVPLVGRLMSARQDTVRQQLADAAAAADRLAEASQAHTKALEDAKSEAHRVVEEARTDAERIAEQLEAQADVEAERIKMQGARQVDLIRAQLTRQLRLELGHESVRQARELVRNHVADQAQQSATVDRFLDQLDAMAPATADVDYPLLAKMRSASRRALTSLVDWFGTMAQDLDHQGLTTLAGELVSVARLLDREAVVTRYLTVPAEDATPRIRLIERLVSGKVGAPTLEVLRTAVSKRWSANSDLIDAIEHVSRQALLELAERAGQVDEVEDQLFRFSRILDVQPRLAILLGDCAVPAEGRVRLLRKVLERADSTVNPVVVALLSHTVELLRGQAVEEAVLFLAEVAVARRGEIVAQVGAAAELSDAQRTRLTEVLSRIYGHPVTVQLHIDAALLGGLSIAVGDEVIDGTLSSRLAAAEARLPD</sequence>
<evidence type="ECO:0000250" key="1"/>
<evidence type="ECO:0000255" key="2"/>
<evidence type="ECO:0000305" key="3"/>
<name>ATPFD_MYCTA</name>
<proteinExistence type="inferred from homology"/>
<protein>
    <recommendedName>
        <fullName>ATP synthase subunit b-delta</fullName>
    </recommendedName>
    <domain>
        <recommendedName>
            <fullName>ATP synthase subunit b</fullName>
        </recommendedName>
        <alternativeName>
            <fullName>ATP synthase F(0) sector subunit b 2</fullName>
        </alternativeName>
        <alternativeName>
            <fullName>ATPase subunit I 2</fullName>
        </alternativeName>
        <alternativeName>
            <fullName>F-type ATPase subunit b 2</fullName>
            <shortName>F-ATPase subunit b 2</shortName>
        </alternativeName>
    </domain>
    <domain>
        <recommendedName>
            <fullName>ATP synthase subunit delta</fullName>
        </recommendedName>
        <alternativeName>
            <fullName>ATP synthase F(1) sector subunit delta</fullName>
        </alternativeName>
        <alternativeName>
            <fullName>F-type ATPase subunit delta</fullName>
            <shortName>F-ATPase subunit delta</shortName>
        </alternativeName>
    </domain>
</protein>
<reference key="1">
    <citation type="journal article" date="2008" name="PLoS ONE">
        <title>Genetic basis of virulence attenuation revealed by comparative genomic analysis of Mycobacterium tuberculosis strain H37Ra versus H37Rv.</title>
        <authorList>
            <person name="Zheng H."/>
            <person name="Lu L."/>
            <person name="Wang B."/>
            <person name="Pu S."/>
            <person name="Zhang X."/>
            <person name="Zhu G."/>
            <person name="Shi W."/>
            <person name="Zhang L."/>
            <person name="Wang H."/>
            <person name="Wang S."/>
            <person name="Zhao G."/>
            <person name="Zhang Y."/>
        </authorList>
    </citation>
    <scope>NUCLEOTIDE SEQUENCE [LARGE SCALE GENOMIC DNA]</scope>
    <source>
        <strain>ATCC 25177 / H37Ra</strain>
    </source>
</reference>
<gene>
    <name type="primary">atpFH</name>
    <name type="synonym">atpF</name>
    <name type="synonym">atpH</name>
    <name type="ordered locus">MRA_1315</name>
</gene>
<accession>A5U206</accession>